<keyword id="KW-1185">Reference proteome</keyword>
<name>Y1980_AERPE</name>
<feature type="chain" id="PRO_0000156796" description="Protein APE_1980.1">
    <location>
        <begin position="1"/>
        <end position="268"/>
    </location>
</feature>
<sequence>MEEHPRAWIISVGNELLIGRTINTNAAWLGSRLTLLGFEVERVVTVPDRVEDIAEEVGRALGRARVVITTGGLGPTYDDVTLQGVAMALGRGLKLHPGALEMVRRFYSKRGLGLTEDRVKMAMLPDGAEPLENPVGAAPGAVVEARGSLVASLPGVPSEMEAMFEKALRPLLEEIAPPGAVVECGIAVVGVPESSLAPYIKEASRVSPRVYVKSHPQGSEIGKPLVRVRVLARASTLEEARAEALKALEKVRRGVEELGGSISEEDSC</sequence>
<organism>
    <name type="scientific">Aeropyrum pernix (strain ATCC 700893 / DSM 11879 / JCM 9820 / NBRC 100138 / K1)</name>
    <dbReference type="NCBI Taxonomy" id="272557"/>
    <lineage>
        <taxon>Archaea</taxon>
        <taxon>Thermoproteota</taxon>
        <taxon>Thermoprotei</taxon>
        <taxon>Desulfurococcales</taxon>
        <taxon>Desulfurococcaceae</taxon>
        <taxon>Aeropyrum</taxon>
    </lineage>
</organism>
<reference key="1">
    <citation type="journal article" date="1999" name="DNA Res.">
        <title>Complete genome sequence of an aerobic hyper-thermophilic crenarchaeon, Aeropyrum pernix K1.</title>
        <authorList>
            <person name="Kawarabayasi Y."/>
            <person name="Hino Y."/>
            <person name="Horikawa H."/>
            <person name="Yamazaki S."/>
            <person name="Haikawa Y."/>
            <person name="Jin-no K."/>
            <person name="Takahashi M."/>
            <person name="Sekine M."/>
            <person name="Baba S."/>
            <person name="Ankai A."/>
            <person name="Kosugi H."/>
            <person name="Hosoyama A."/>
            <person name="Fukui S."/>
            <person name="Nagai Y."/>
            <person name="Nishijima K."/>
            <person name="Nakazawa H."/>
            <person name="Takamiya M."/>
            <person name="Masuda S."/>
            <person name="Funahashi T."/>
            <person name="Tanaka T."/>
            <person name="Kudoh Y."/>
            <person name="Yamazaki J."/>
            <person name="Kushida N."/>
            <person name="Oguchi A."/>
            <person name="Aoki K."/>
            <person name="Kubota K."/>
            <person name="Nakamura Y."/>
            <person name="Nomura N."/>
            <person name="Sako Y."/>
            <person name="Kikuchi H."/>
        </authorList>
    </citation>
    <scope>NUCLEOTIDE SEQUENCE [LARGE SCALE GENOMIC DNA]</scope>
    <source>
        <strain>ATCC 700893 / DSM 11879 / JCM 9820 / NBRC 100138 / K1</strain>
    </source>
</reference>
<dbReference type="EMBL" id="BA000002">
    <property type="protein sequence ID" value="BAA80990.2"/>
    <property type="molecule type" value="Genomic_DNA"/>
</dbReference>
<dbReference type="PIR" id="F72500">
    <property type="entry name" value="F72500"/>
</dbReference>
<dbReference type="RefSeq" id="WP_010866719.1">
    <property type="nucleotide sequence ID" value="NC_000854.2"/>
</dbReference>
<dbReference type="SMR" id="Q9YAF9"/>
<dbReference type="STRING" id="272557.APE_1980.1"/>
<dbReference type="DNASU" id="1445108"/>
<dbReference type="EnsemblBacteria" id="BAA80990">
    <property type="protein sequence ID" value="BAA80990"/>
    <property type="gene ID" value="APE_1980.1"/>
</dbReference>
<dbReference type="GeneID" id="1445108"/>
<dbReference type="KEGG" id="ape:APE_1980.1"/>
<dbReference type="PATRIC" id="fig|272557.25.peg.1322"/>
<dbReference type="eggNOG" id="arCOG00215">
    <property type="taxonomic scope" value="Archaea"/>
</dbReference>
<dbReference type="Proteomes" id="UP000002518">
    <property type="component" value="Chromosome"/>
</dbReference>
<dbReference type="CDD" id="cd00885">
    <property type="entry name" value="cinA"/>
    <property type="match status" value="1"/>
</dbReference>
<dbReference type="Gene3D" id="3.40.980.10">
    <property type="entry name" value="MoaB/Mog-like domain"/>
    <property type="match status" value="1"/>
</dbReference>
<dbReference type="HAMAP" id="MF_00226_A">
    <property type="entry name" value="CinA_A"/>
    <property type="match status" value="1"/>
</dbReference>
<dbReference type="InterPro" id="IPR050101">
    <property type="entry name" value="CinA"/>
</dbReference>
<dbReference type="InterPro" id="IPR023055">
    <property type="entry name" value="CinA_Arc"/>
</dbReference>
<dbReference type="InterPro" id="IPR036425">
    <property type="entry name" value="MoaB/Mog-like_dom_sf"/>
</dbReference>
<dbReference type="InterPro" id="IPR001453">
    <property type="entry name" value="MoaB/Mog_dom"/>
</dbReference>
<dbReference type="NCBIfam" id="TIGR00177">
    <property type="entry name" value="molyb_syn"/>
    <property type="match status" value="1"/>
</dbReference>
<dbReference type="NCBIfam" id="NF002291">
    <property type="entry name" value="PRK01215.1"/>
    <property type="match status" value="1"/>
</dbReference>
<dbReference type="PANTHER" id="PTHR13939">
    <property type="entry name" value="NICOTINAMIDE-NUCLEOTIDE AMIDOHYDROLASE PNCC"/>
    <property type="match status" value="1"/>
</dbReference>
<dbReference type="PANTHER" id="PTHR13939:SF0">
    <property type="entry name" value="NMN AMIDOHYDROLASE-LIKE PROTEIN YFAY"/>
    <property type="match status" value="1"/>
</dbReference>
<dbReference type="Pfam" id="PF00994">
    <property type="entry name" value="MoCF_biosynth"/>
    <property type="match status" value="1"/>
</dbReference>
<dbReference type="SMART" id="SM00852">
    <property type="entry name" value="MoCF_biosynth"/>
    <property type="match status" value="1"/>
</dbReference>
<dbReference type="SUPFAM" id="SSF53218">
    <property type="entry name" value="Molybdenum cofactor biosynthesis proteins"/>
    <property type="match status" value="1"/>
</dbReference>
<protein>
    <recommendedName>
        <fullName evidence="1">Protein APE_1980.1</fullName>
    </recommendedName>
</protein>
<comment type="similarity">
    <text evidence="1">Belongs to the CinA family.</text>
</comment>
<proteinExistence type="inferred from homology"/>
<evidence type="ECO:0000255" key="1">
    <source>
        <dbReference type="HAMAP-Rule" id="MF_00226"/>
    </source>
</evidence>
<gene>
    <name type="ordered locus">APE_1980.1</name>
</gene>
<accession>Q9YAF9</accession>